<keyword id="KW-0687">Ribonucleoprotein</keyword>
<keyword id="KW-0689">Ribosomal protein</keyword>
<keyword id="KW-0694">RNA-binding</keyword>
<keyword id="KW-0699">rRNA-binding</keyword>
<accession>A7ZFZ5</accession>
<dbReference type="EMBL" id="CP000792">
    <property type="protein sequence ID" value="EAT98119.1"/>
    <property type="molecule type" value="Genomic_DNA"/>
</dbReference>
<dbReference type="RefSeq" id="WP_002941646.1">
    <property type="nucleotide sequence ID" value="NC_009802.2"/>
</dbReference>
<dbReference type="SMR" id="A7ZFZ5"/>
<dbReference type="STRING" id="360104.CCC13826_1759"/>
<dbReference type="GeneID" id="28663418"/>
<dbReference type="KEGG" id="cco:CCC13826_1759"/>
<dbReference type="eggNOG" id="COG0098">
    <property type="taxonomic scope" value="Bacteria"/>
</dbReference>
<dbReference type="HOGENOM" id="CLU_065898_2_2_7"/>
<dbReference type="OrthoDB" id="9809045at2"/>
<dbReference type="Proteomes" id="UP000001121">
    <property type="component" value="Chromosome"/>
</dbReference>
<dbReference type="GO" id="GO:0015935">
    <property type="term" value="C:small ribosomal subunit"/>
    <property type="evidence" value="ECO:0007669"/>
    <property type="project" value="InterPro"/>
</dbReference>
<dbReference type="GO" id="GO:0019843">
    <property type="term" value="F:rRNA binding"/>
    <property type="evidence" value="ECO:0007669"/>
    <property type="project" value="UniProtKB-UniRule"/>
</dbReference>
<dbReference type="GO" id="GO:0003735">
    <property type="term" value="F:structural constituent of ribosome"/>
    <property type="evidence" value="ECO:0007669"/>
    <property type="project" value="InterPro"/>
</dbReference>
<dbReference type="GO" id="GO:0006412">
    <property type="term" value="P:translation"/>
    <property type="evidence" value="ECO:0007669"/>
    <property type="project" value="UniProtKB-UniRule"/>
</dbReference>
<dbReference type="FunFam" id="3.30.160.20:FF:000001">
    <property type="entry name" value="30S ribosomal protein S5"/>
    <property type="match status" value="1"/>
</dbReference>
<dbReference type="FunFam" id="3.30.230.10:FF:000024">
    <property type="entry name" value="30S ribosomal protein S5"/>
    <property type="match status" value="1"/>
</dbReference>
<dbReference type="Gene3D" id="3.30.160.20">
    <property type="match status" value="1"/>
</dbReference>
<dbReference type="Gene3D" id="3.30.230.10">
    <property type="match status" value="1"/>
</dbReference>
<dbReference type="HAMAP" id="MF_01307_B">
    <property type="entry name" value="Ribosomal_uS5_B"/>
    <property type="match status" value="1"/>
</dbReference>
<dbReference type="InterPro" id="IPR020568">
    <property type="entry name" value="Ribosomal_Su5_D2-typ_SF"/>
</dbReference>
<dbReference type="InterPro" id="IPR000851">
    <property type="entry name" value="Ribosomal_uS5"/>
</dbReference>
<dbReference type="InterPro" id="IPR005712">
    <property type="entry name" value="Ribosomal_uS5_bac-type"/>
</dbReference>
<dbReference type="InterPro" id="IPR005324">
    <property type="entry name" value="Ribosomal_uS5_C"/>
</dbReference>
<dbReference type="InterPro" id="IPR013810">
    <property type="entry name" value="Ribosomal_uS5_N"/>
</dbReference>
<dbReference type="InterPro" id="IPR018192">
    <property type="entry name" value="Ribosomal_uS5_N_CS"/>
</dbReference>
<dbReference type="InterPro" id="IPR014721">
    <property type="entry name" value="Ribsml_uS5_D2-typ_fold_subgr"/>
</dbReference>
<dbReference type="NCBIfam" id="TIGR01021">
    <property type="entry name" value="rpsE_bact"/>
    <property type="match status" value="1"/>
</dbReference>
<dbReference type="PANTHER" id="PTHR48277">
    <property type="entry name" value="MITOCHONDRIAL RIBOSOMAL PROTEIN S5"/>
    <property type="match status" value="1"/>
</dbReference>
<dbReference type="PANTHER" id="PTHR48277:SF1">
    <property type="entry name" value="MITOCHONDRIAL RIBOSOMAL PROTEIN S5"/>
    <property type="match status" value="1"/>
</dbReference>
<dbReference type="Pfam" id="PF00333">
    <property type="entry name" value="Ribosomal_S5"/>
    <property type="match status" value="1"/>
</dbReference>
<dbReference type="Pfam" id="PF03719">
    <property type="entry name" value="Ribosomal_S5_C"/>
    <property type="match status" value="1"/>
</dbReference>
<dbReference type="SUPFAM" id="SSF54768">
    <property type="entry name" value="dsRNA-binding domain-like"/>
    <property type="match status" value="1"/>
</dbReference>
<dbReference type="SUPFAM" id="SSF54211">
    <property type="entry name" value="Ribosomal protein S5 domain 2-like"/>
    <property type="match status" value="1"/>
</dbReference>
<dbReference type="PROSITE" id="PS00585">
    <property type="entry name" value="RIBOSOMAL_S5"/>
    <property type="match status" value="1"/>
</dbReference>
<dbReference type="PROSITE" id="PS50881">
    <property type="entry name" value="S5_DSRBD"/>
    <property type="match status" value="1"/>
</dbReference>
<protein>
    <recommendedName>
        <fullName evidence="1">Small ribosomal subunit protein uS5</fullName>
    </recommendedName>
    <alternativeName>
        <fullName evidence="2">30S ribosomal protein S5</fullName>
    </alternativeName>
</protein>
<reference key="1">
    <citation type="submission" date="2007-10" db="EMBL/GenBank/DDBJ databases">
        <title>Genome sequence of Campylobacter concisus 13826 isolated from human feces.</title>
        <authorList>
            <person name="Fouts D.E."/>
            <person name="Mongodin E.F."/>
            <person name="Puiu D."/>
            <person name="Sebastian Y."/>
            <person name="Miller W.G."/>
            <person name="Mandrell R.E."/>
            <person name="On S."/>
            <person name="Nelson K.E."/>
        </authorList>
    </citation>
    <scope>NUCLEOTIDE SEQUENCE [LARGE SCALE GENOMIC DNA]</scope>
    <source>
        <strain>13826</strain>
    </source>
</reference>
<gene>
    <name evidence="1" type="primary">rpsE</name>
    <name type="ordered locus">Ccon26_18680</name>
    <name type="ORF">CCC13826_1759</name>
</gene>
<feature type="chain" id="PRO_0000323096" description="Small ribosomal subunit protein uS5">
    <location>
        <begin position="1"/>
        <end position="147"/>
    </location>
</feature>
<feature type="domain" description="S5 DRBM" evidence="1">
    <location>
        <begin position="9"/>
        <end position="72"/>
    </location>
</feature>
<comment type="function">
    <text evidence="1">With S4 and S12 plays an important role in translational accuracy.</text>
</comment>
<comment type="function">
    <text evidence="1">Located at the back of the 30S subunit body where it stabilizes the conformation of the head with respect to the body.</text>
</comment>
<comment type="subunit">
    <text evidence="1">Part of the 30S ribosomal subunit. Contacts proteins S4 and S8.</text>
</comment>
<comment type="domain">
    <text>The N-terminal domain interacts with the head of the 30S subunit; the C-terminal domain interacts with the body and contacts protein S4. The interaction surface between S4 and S5 is involved in control of translational fidelity.</text>
</comment>
<comment type="similarity">
    <text evidence="1">Belongs to the universal ribosomal protein uS5 family.</text>
</comment>
<name>RS5_CAMC1</name>
<sequence length="147" mass="15951">MEKYNREEFEEVIVDIGRVTKVVKGGRRFRFTALVVVGNRNGLVGFGYGKAKEVPDAMRKAIDDAFKNIIHVKIKGTTIPHDVEVKYNASRMLLRPASEGTGVIAGGSARPIIELAGIKDILTKSLGSNNSANVVRATIKALSLLKS</sequence>
<organism>
    <name type="scientific">Campylobacter concisus (strain 13826)</name>
    <dbReference type="NCBI Taxonomy" id="360104"/>
    <lineage>
        <taxon>Bacteria</taxon>
        <taxon>Pseudomonadati</taxon>
        <taxon>Campylobacterota</taxon>
        <taxon>Epsilonproteobacteria</taxon>
        <taxon>Campylobacterales</taxon>
        <taxon>Campylobacteraceae</taxon>
        <taxon>Campylobacter</taxon>
    </lineage>
</organism>
<evidence type="ECO:0000255" key="1">
    <source>
        <dbReference type="HAMAP-Rule" id="MF_01307"/>
    </source>
</evidence>
<evidence type="ECO:0000305" key="2"/>
<proteinExistence type="inferred from homology"/>